<feature type="chain" id="PRO_0000237178" description="Large ribosomal subunit protein uL2">
    <location>
        <begin position="1"/>
        <end position="274"/>
    </location>
</feature>
<feature type="region of interest" description="Disordered" evidence="2">
    <location>
        <begin position="1"/>
        <end position="23"/>
    </location>
</feature>
<protein>
    <recommendedName>
        <fullName evidence="1">Large ribosomal subunit protein uL2</fullName>
    </recommendedName>
    <alternativeName>
        <fullName evidence="3">50S ribosomal protein L2</fullName>
    </alternativeName>
</protein>
<organism>
    <name type="scientific">Dehalococcoides mccartyi (strain CBDB1)</name>
    <dbReference type="NCBI Taxonomy" id="255470"/>
    <lineage>
        <taxon>Bacteria</taxon>
        <taxon>Bacillati</taxon>
        <taxon>Chloroflexota</taxon>
        <taxon>Dehalococcoidia</taxon>
        <taxon>Dehalococcoidales</taxon>
        <taxon>Dehalococcoidaceae</taxon>
        <taxon>Dehalococcoides</taxon>
    </lineage>
</organism>
<reference key="1">
    <citation type="journal article" date="2005" name="Nat. Biotechnol.">
        <title>Genome sequence of the chlorinated compound-respiring bacterium Dehalococcoides species strain CBDB1.</title>
        <authorList>
            <person name="Kube M."/>
            <person name="Beck A."/>
            <person name="Zinder S.H."/>
            <person name="Kuhl H."/>
            <person name="Reinhardt R."/>
            <person name="Adrian L."/>
        </authorList>
    </citation>
    <scope>NUCLEOTIDE SEQUENCE [LARGE SCALE GENOMIC DNA]</scope>
    <source>
        <strain>CBDB1</strain>
    </source>
</reference>
<accession>Q3ZZM1</accession>
<sequence length="274" mass="29894">MAIKIYRPTSPGRRHHSVSSFEEITKSRPERALLVSVKNDSGRNNQGRVTVRHRGGGSKTQIRVIDFKRNKLDVPGRVAAIEYDPNRTARIALVFYTDGEKRYILAPSDLKVGDVIMAGENAEPKSGNALPLSSIPTGTFIHNIEIIKGKGGIMVRSAGAAAQLMAKEDDYALVRLPSGEMRKVRSDCSATVGQIGNIEHGTLEIGKAGRNRHLGWRPTVRGSAMSPNNHPHGGGECRCPIGMTGPKTPWGKPALGYRTRKAKYSDKLIVKRRG</sequence>
<proteinExistence type="inferred from homology"/>
<keyword id="KW-0687">Ribonucleoprotein</keyword>
<keyword id="KW-0689">Ribosomal protein</keyword>
<keyword id="KW-0694">RNA-binding</keyword>
<keyword id="KW-0699">rRNA-binding</keyword>
<gene>
    <name evidence="1" type="primary">rplB</name>
    <name type="ordered locus">cbdbA442</name>
</gene>
<name>RL2_DEHMC</name>
<comment type="function">
    <text evidence="1">One of the primary rRNA binding proteins. Required for association of the 30S and 50S subunits to form the 70S ribosome, for tRNA binding and peptide bond formation. It has been suggested to have peptidyltransferase activity; this is somewhat controversial. Makes several contacts with the 16S rRNA in the 70S ribosome.</text>
</comment>
<comment type="subunit">
    <text evidence="1">Part of the 50S ribosomal subunit. Forms a bridge to the 30S subunit in the 70S ribosome.</text>
</comment>
<comment type="similarity">
    <text evidence="1">Belongs to the universal ribosomal protein uL2 family.</text>
</comment>
<evidence type="ECO:0000255" key="1">
    <source>
        <dbReference type="HAMAP-Rule" id="MF_01320"/>
    </source>
</evidence>
<evidence type="ECO:0000256" key="2">
    <source>
        <dbReference type="SAM" id="MobiDB-lite"/>
    </source>
</evidence>
<evidence type="ECO:0000305" key="3"/>
<dbReference type="EMBL" id="AJ965256">
    <property type="protein sequence ID" value="CAI82642.1"/>
    <property type="molecule type" value="Genomic_DNA"/>
</dbReference>
<dbReference type="RefSeq" id="WP_011308999.1">
    <property type="nucleotide sequence ID" value="NC_007356.1"/>
</dbReference>
<dbReference type="SMR" id="Q3ZZM1"/>
<dbReference type="KEGG" id="deh:cbdbA442"/>
<dbReference type="HOGENOM" id="CLU_036235_2_1_0"/>
<dbReference type="Proteomes" id="UP000000433">
    <property type="component" value="Chromosome"/>
</dbReference>
<dbReference type="GO" id="GO:0015934">
    <property type="term" value="C:large ribosomal subunit"/>
    <property type="evidence" value="ECO:0007669"/>
    <property type="project" value="InterPro"/>
</dbReference>
<dbReference type="GO" id="GO:0019843">
    <property type="term" value="F:rRNA binding"/>
    <property type="evidence" value="ECO:0007669"/>
    <property type="project" value="UniProtKB-UniRule"/>
</dbReference>
<dbReference type="GO" id="GO:0003735">
    <property type="term" value="F:structural constituent of ribosome"/>
    <property type="evidence" value="ECO:0007669"/>
    <property type="project" value="InterPro"/>
</dbReference>
<dbReference type="GO" id="GO:0016740">
    <property type="term" value="F:transferase activity"/>
    <property type="evidence" value="ECO:0007669"/>
    <property type="project" value="InterPro"/>
</dbReference>
<dbReference type="GO" id="GO:0002181">
    <property type="term" value="P:cytoplasmic translation"/>
    <property type="evidence" value="ECO:0007669"/>
    <property type="project" value="TreeGrafter"/>
</dbReference>
<dbReference type="FunFam" id="2.30.30.30:FF:000001">
    <property type="entry name" value="50S ribosomal protein L2"/>
    <property type="match status" value="1"/>
</dbReference>
<dbReference type="FunFam" id="2.40.50.140:FF:000003">
    <property type="entry name" value="50S ribosomal protein L2"/>
    <property type="match status" value="1"/>
</dbReference>
<dbReference type="FunFam" id="4.10.950.10:FF:000001">
    <property type="entry name" value="50S ribosomal protein L2"/>
    <property type="match status" value="1"/>
</dbReference>
<dbReference type="Gene3D" id="2.30.30.30">
    <property type="match status" value="1"/>
</dbReference>
<dbReference type="Gene3D" id="2.40.50.140">
    <property type="entry name" value="Nucleic acid-binding proteins"/>
    <property type="match status" value="1"/>
</dbReference>
<dbReference type="Gene3D" id="4.10.950.10">
    <property type="entry name" value="Ribosomal protein L2, domain 3"/>
    <property type="match status" value="1"/>
</dbReference>
<dbReference type="HAMAP" id="MF_01320_B">
    <property type="entry name" value="Ribosomal_uL2_B"/>
    <property type="match status" value="1"/>
</dbReference>
<dbReference type="InterPro" id="IPR012340">
    <property type="entry name" value="NA-bd_OB-fold"/>
</dbReference>
<dbReference type="InterPro" id="IPR014722">
    <property type="entry name" value="Rib_uL2_dom2"/>
</dbReference>
<dbReference type="InterPro" id="IPR002171">
    <property type="entry name" value="Ribosomal_uL2"/>
</dbReference>
<dbReference type="InterPro" id="IPR005880">
    <property type="entry name" value="Ribosomal_uL2_bac/org-type"/>
</dbReference>
<dbReference type="InterPro" id="IPR022669">
    <property type="entry name" value="Ribosomal_uL2_C"/>
</dbReference>
<dbReference type="InterPro" id="IPR014726">
    <property type="entry name" value="Ribosomal_uL2_dom3"/>
</dbReference>
<dbReference type="InterPro" id="IPR022666">
    <property type="entry name" value="Ribosomal_uL2_RNA-bd_dom"/>
</dbReference>
<dbReference type="InterPro" id="IPR008991">
    <property type="entry name" value="Translation_prot_SH3-like_sf"/>
</dbReference>
<dbReference type="NCBIfam" id="TIGR01171">
    <property type="entry name" value="rplB_bact"/>
    <property type="match status" value="1"/>
</dbReference>
<dbReference type="PANTHER" id="PTHR13691:SF5">
    <property type="entry name" value="LARGE RIBOSOMAL SUBUNIT PROTEIN UL2M"/>
    <property type="match status" value="1"/>
</dbReference>
<dbReference type="PANTHER" id="PTHR13691">
    <property type="entry name" value="RIBOSOMAL PROTEIN L2"/>
    <property type="match status" value="1"/>
</dbReference>
<dbReference type="Pfam" id="PF00181">
    <property type="entry name" value="Ribosomal_L2"/>
    <property type="match status" value="1"/>
</dbReference>
<dbReference type="Pfam" id="PF03947">
    <property type="entry name" value="Ribosomal_L2_C"/>
    <property type="match status" value="1"/>
</dbReference>
<dbReference type="PIRSF" id="PIRSF002158">
    <property type="entry name" value="Ribosomal_L2"/>
    <property type="match status" value="1"/>
</dbReference>
<dbReference type="SMART" id="SM01383">
    <property type="entry name" value="Ribosomal_L2"/>
    <property type="match status" value="1"/>
</dbReference>
<dbReference type="SMART" id="SM01382">
    <property type="entry name" value="Ribosomal_L2_C"/>
    <property type="match status" value="1"/>
</dbReference>
<dbReference type="SUPFAM" id="SSF50249">
    <property type="entry name" value="Nucleic acid-binding proteins"/>
    <property type="match status" value="1"/>
</dbReference>
<dbReference type="SUPFAM" id="SSF50104">
    <property type="entry name" value="Translation proteins SH3-like domain"/>
    <property type="match status" value="1"/>
</dbReference>